<reference key="1">
    <citation type="journal article" date="1993" name="Mol. Cell. Biol.">
        <title>Cloning of the gene encoding peptide-binding protein 74 shows that it is a new member of the heat shock protein 70 family.</title>
        <authorList>
            <person name="Domanico S.Z."/>
            <person name="Denagel D.C."/>
            <person name="Dahlseid J.N."/>
            <person name="Green J.M."/>
            <person name="Pierce S.K."/>
        </authorList>
    </citation>
    <scope>NUCLEOTIDE SEQUENCE [MRNA]</scope>
    <source>
        <tissue>B-cell</tissue>
    </source>
</reference>
<reference key="2">
    <citation type="journal article" date="1995" name="J. Biol. Chem.">
        <title>Cloning and subcellular localization of human mitochondrial hsp70.</title>
        <authorList>
            <person name="Bhattacharyya T."/>
            <person name="Karnezis A.N."/>
            <person name="Murphy S.P."/>
            <person name="Hoang T."/>
            <person name="Freeman B.C."/>
            <person name="Phillips B."/>
            <person name="Morimoto R.I."/>
        </authorList>
    </citation>
    <scope>NUCLEOTIDE SEQUENCE [MRNA]</scope>
</reference>
<reference key="3">
    <citation type="journal article" date="2004" name="Nat. Genet.">
        <title>Complete sequencing and characterization of 21,243 full-length human cDNAs.</title>
        <authorList>
            <person name="Ota T."/>
            <person name="Suzuki Y."/>
            <person name="Nishikawa T."/>
            <person name="Otsuki T."/>
            <person name="Sugiyama T."/>
            <person name="Irie R."/>
            <person name="Wakamatsu A."/>
            <person name="Hayashi K."/>
            <person name="Sato H."/>
            <person name="Nagai K."/>
            <person name="Kimura K."/>
            <person name="Makita H."/>
            <person name="Sekine M."/>
            <person name="Obayashi M."/>
            <person name="Nishi T."/>
            <person name="Shibahara T."/>
            <person name="Tanaka T."/>
            <person name="Ishii S."/>
            <person name="Yamamoto J."/>
            <person name="Saito K."/>
            <person name="Kawai Y."/>
            <person name="Isono Y."/>
            <person name="Nakamura Y."/>
            <person name="Nagahari K."/>
            <person name="Murakami K."/>
            <person name="Yasuda T."/>
            <person name="Iwayanagi T."/>
            <person name="Wagatsuma M."/>
            <person name="Shiratori A."/>
            <person name="Sudo H."/>
            <person name="Hosoiri T."/>
            <person name="Kaku Y."/>
            <person name="Kodaira H."/>
            <person name="Kondo H."/>
            <person name="Sugawara M."/>
            <person name="Takahashi M."/>
            <person name="Kanda K."/>
            <person name="Yokoi T."/>
            <person name="Furuya T."/>
            <person name="Kikkawa E."/>
            <person name="Omura Y."/>
            <person name="Abe K."/>
            <person name="Kamihara K."/>
            <person name="Katsuta N."/>
            <person name="Sato K."/>
            <person name="Tanikawa M."/>
            <person name="Yamazaki M."/>
            <person name="Ninomiya K."/>
            <person name="Ishibashi T."/>
            <person name="Yamashita H."/>
            <person name="Murakawa K."/>
            <person name="Fujimori K."/>
            <person name="Tanai H."/>
            <person name="Kimata M."/>
            <person name="Watanabe M."/>
            <person name="Hiraoka S."/>
            <person name="Chiba Y."/>
            <person name="Ishida S."/>
            <person name="Ono Y."/>
            <person name="Takiguchi S."/>
            <person name="Watanabe S."/>
            <person name="Yosida M."/>
            <person name="Hotuta T."/>
            <person name="Kusano J."/>
            <person name="Kanehori K."/>
            <person name="Takahashi-Fujii A."/>
            <person name="Hara H."/>
            <person name="Tanase T.-O."/>
            <person name="Nomura Y."/>
            <person name="Togiya S."/>
            <person name="Komai F."/>
            <person name="Hara R."/>
            <person name="Takeuchi K."/>
            <person name="Arita M."/>
            <person name="Imose N."/>
            <person name="Musashino K."/>
            <person name="Yuuki H."/>
            <person name="Oshima A."/>
            <person name="Sasaki N."/>
            <person name="Aotsuka S."/>
            <person name="Yoshikawa Y."/>
            <person name="Matsunawa H."/>
            <person name="Ichihara T."/>
            <person name="Shiohata N."/>
            <person name="Sano S."/>
            <person name="Moriya S."/>
            <person name="Momiyama H."/>
            <person name="Satoh N."/>
            <person name="Takami S."/>
            <person name="Terashima Y."/>
            <person name="Suzuki O."/>
            <person name="Nakagawa S."/>
            <person name="Senoh A."/>
            <person name="Mizoguchi H."/>
            <person name="Goto Y."/>
            <person name="Shimizu F."/>
            <person name="Wakebe H."/>
            <person name="Hishigaki H."/>
            <person name="Watanabe T."/>
            <person name="Sugiyama A."/>
            <person name="Takemoto M."/>
            <person name="Kawakami B."/>
            <person name="Yamazaki M."/>
            <person name="Watanabe K."/>
            <person name="Kumagai A."/>
            <person name="Itakura S."/>
            <person name="Fukuzumi Y."/>
            <person name="Fujimori Y."/>
            <person name="Komiyama M."/>
            <person name="Tashiro H."/>
            <person name="Tanigami A."/>
            <person name="Fujiwara T."/>
            <person name="Ono T."/>
            <person name="Yamada K."/>
            <person name="Fujii Y."/>
            <person name="Ozaki K."/>
            <person name="Hirao M."/>
            <person name="Ohmori Y."/>
            <person name="Kawabata A."/>
            <person name="Hikiji T."/>
            <person name="Kobatake N."/>
            <person name="Inagaki H."/>
            <person name="Ikema Y."/>
            <person name="Okamoto S."/>
            <person name="Okitani R."/>
            <person name="Kawakami T."/>
            <person name="Noguchi S."/>
            <person name="Itoh T."/>
            <person name="Shigeta K."/>
            <person name="Senba T."/>
            <person name="Matsumura K."/>
            <person name="Nakajima Y."/>
            <person name="Mizuno T."/>
            <person name="Morinaga M."/>
            <person name="Sasaki M."/>
            <person name="Togashi T."/>
            <person name="Oyama M."/>
            <person name="Hata H."/>
            <person name="Watanabe M."/>
            <person name="Komatsu T."/>
            <person name="Mizushima-Sugano J."/>
            <person name="Satoh T."/>
            <person name="Shirai Y."/>
            <person name="Takahashi Y."/>
            <person name="Nakagawa K."/>
            <person name="Okumura K."/>
            <person name="Nagase T."/>
            <person name="Nomura N."/>
            <person name="Kikuchi H."/>
            <person name="Masuho Y."/>
            <person name="Yamashita R."/>
            <person name="Nakai K."/>
            <person name="Yada T."/>
            <person name="Nakamura Y."/>
            <person name="Ohara O."/>
            <person name="Isogai T."/>
            <person name="Sugano S."/>
        </authorList>
    </citation>
    <scope>NUCLEOTIDE SEQUENCE [LARGE SCALE MRNA]</scope>
    <source>
        <tissue>Teratocarcinoma</tissue>
    </source>
</reference>
<reference key="4">
    <citation type="submission" date="2005-04" db="EMBL/GenBank/DDBJ databases">
        <authorList>
            <person name="Suzuki Y."/>
            <person name="Sugano S."/>
            <person name="Totoki Y."/>
            <person name="Toyoda A."/>
            <person name="Takeda T."/>
            <person name="Sakaki Y."/>
            <person name="Tanaka A."/>
            <person name="Yokoyama S."/>
        </authorList>
    </citation>
    <scope>NUCLEOTIDE SEQUENCE [LARGE SCALE MRNA]</scope>
    <source>
        <tissue>Liver</tissue>
    </source>
</reference>
<reference key="5">
    <citation type="submission" date="2006-05" db="EMBL/GenBank/DDBJ databases">
        <authorList>
            <consortium name="NIEHS SNPs program"/>
        </authorList>
    </citation>
    <scope>NUCLEOTIDE SEQUENCE [GENOMIC DNA]</scope>
    <scope>VARIANT TYR-184</scope>
</reference>
<reference key="6">
    <citation type="submission" date="2005-09" db="EMBL/GenBank/DDBJ databases">
        <authorList>
            <person name="Mural R.J."/>
            <person name="Istrail S."/>
            <person name="Sutton G.G."/>
            <person name="Florea L."/>
            <person name="Halpern A.L."/>
            <person name="Mobarry C.M."/>
            <person name="Lippert R."/>
            <person name="Walenz B."/>
            <person name="Shatkay H."/>
            <person name="Dew I."/>
            <person name="Miller J.R."/>
            <person name="Flanigan M.J."/>
            <person name="Edwards N.J."/>
            <person name="Bolanos R."/>
            <person name="Fasulo D."/>
            <person name="Halldorsson B.V."/>
            <person name="Hannenhalli S."/>
            <person name="Turner R."/>
            <person name="Yooseph S."/>
            <person name="Lu F."/>
            <person name="Nusskern D.R."/>
            <person name="Shue B.C."/>
            <person name="Zheng X.H."/>
            <person name="Zhong F."/>
            <person name="Delcher A.L."/>
            <person name="Huson D.H."/>
            <person name="Kravitz S.A."/>
            <person name="Mouchard L."/>
            <person name="Reinert K."/>
            <person name="Remington K.A."/>
            <person name="Clark A.G."/>
            <person name="Waterman M.S."/>
            <person name="Eichler E.E."/>
            <person name="Adams M.D."/>
            <person name="Hunkapiller M.W."/>
            <person name="Myers E.W."/>
            <person name="Venter J.C."/>
        </authorList>
    </citation>
    <scope>NUCLEOTIDE SEQUENCE [LARGE SCALE GENOMIC DNA]</scope>
</reference>
<reference key="7">
    <citation type="journal article" date="2004" name="Genome Res.">
        <title>The status, quality, and expansion of the NIH full-length cDNA project: the Mammalian Gene Collection (MGC).</title>
        <authorList>
            <consortium name="The MGC Project Team"/>
        </authorList>
    </citation>
    <scope>NUCLEOTIDE SEQUENCE [LARGE SCALE MRNA]</scope>
    <scope>VARIANT ARG-74</scope>
    <source>
        <tissue>Muscle</tissue>
    </source>
</reference>
<reference key="8">
    <citation type="journal article" date="1997" name="Electrophoresis">
        <title>A two-dimensional gel database of human colon carcinoma proteins.</title>
        <authorList>
            <person name="Ji H."/>
            <person name="Reid G.E."/>
            <person name="Moritz R.L."/>
            <person name="Eddes J.S."/>
            <person name="Burgess A.W."/>
            <person name="Simpson R.J."/>
        </authorList>
    </citation>
    <scope>PROTEIN SEQUENCE OF 47-68</scope>
    <source>
        <tissue>Colon carcinoma</tissue>
    </source>
</reference>
<reference key="9">
    <citation type="journal article" date="1995" name="Electrophoresis">
        <title>Analysis of proteins from human breast epithelial cells using two-dimensional gel electrophoresis.</title>
        <authorList>
            <person name="Giometti C.S."/>
            <person name="Tollaksen S.L."/>
            <person name="Chubb C."/>
            <person name="Williams C."/>
            <person name="Huberman E."/>
        </authorList>
    </citation>
    <scope>PROTEIN SEQUENCE OF 47-66</scope>
    <source>
        <tissue>Mammary gland</tissue>
    </source>
</reference>
<reference key="10">
    <citation type="journal article" date="1992" name="Electrophoresis">
        <title>Human liver protein map: a reference database established by microsequencing and gel comparison.</title>
        <authorList>
            <person name="Hochstrasser D.F."/>
            <person name="Frutiger S."/>
            <person name="Paquet N."/>
            <person name="Bairoch A."/>
            <person name="Ravier F."/>
            <person name="Pasquali C."/>
            <person name="Sanchez J.-C."/>
            <person name="Tissot J.-D."/>
            <person name="Bjellqvist B."/>
            <person name="Vargas R."/>
            <person name="Appel R.D."/>
            <person name="Hughes G.J."/>
        </authorList>
    </citation>
    <scope>PROTEIN SEQUENCE OF 47-56</scope>
    <source>
        <tissue>Liver</tissue>
    </source>
</reference>
<reference key="11">
    <citation type="journal article" date="1993" name="Electrophoresis">
        <title>Human liver protein map: update 1993.</title>
        <authorList>
            <person name="Hughes G.J."/>
            <person name="Frutiger S."/>
            <person name="Paquet N."/>
            <person name="Pasquali C."/>
            <person name="Sanchez J.-C."/>
            <person name="Tissot J.-D."/>
            <person name="Bairoch A."/>
            <person name="Appel R.D."/>
            <person name="Hochstrasser D.F."/>
        </authorList>
    </citation>
    <scope>SEQUENCE REVISION</scope>
    <source>
        <tissue>Liver</tissue>
    </source>
</reference>
<reference key="12">
    <citation type="submission" date="2008-12" db="UniProtKB">
        <authorList>
            <person name="Lubec G."/>
            <person name="Afjehi-Sadat L."/>
            <person name="Chen W.-Q."/>
            <person name="Sun Y."/>
        </authorList>
    </citation>
    <scope>PROTEIN SEQUENCE OF 86-99; 108-121; 160-173; 188-202; 207-234; 349-360; 378-391; 395-405; 469-485; 499-513 AND 542-555</scope>
    <scope>IDENTIFICATION BY MASS SPECTROMETRY</scope>
    <source>
        <tissue>Brain</tissue>
        <tissue>Cajal-Retzius cell</tissue>
        <tissue>Fetal brain cortex</tissue>
    </source>
</reference>
<reference key="13">
    <citation type="journal article" date="2003" name="Nature">
        <title>Proteomic characterization of the human centrosome by protein correlation profiling.</title>
        <authorList>
            <person name="Andersen J.S."/>
            <person name="Wilkinson C.J."/>
            <person name="Mayor T."/>
            <person name="Mortensen P."/>
            <person name="Nigg E.A."/>
            <person name="Mann M."/>
        </authorList>
    </citation>
    <scope>IDENTIFICATION BY MASS SPECTROMETRY</scope>
    <source>
        <tissue>Lymphoblast</tissue>
    </source>
</reference>
<reference key="14">
    <citation type="journal article" date="1999" name="J. Mol. Biol.">
        <title>Genetic and structural characterization of the human mitochondrial inner membrane translocase.</title>
        <authorList>
            <person name="Bauer M.F."/>
            <person name="Gempel K."/>
            <person name="Reichert A.S."/>
            <person name="Rappold G.A."/>
            <person name="Lichtner P."/>
            <person name="Gerbitz K.-D."/>
            <person name="Neupert W."/>
            <person name="Brunner M."/>
            <person name="Hofmann S."/>
        </authorList>
    </citation>
    <scope>IDENTIFICATION IN THE TIM23 COMPLEX</scope>
</reference>
<reference key="15">
    <citation type="journal article" date="2005" name="Int. Immunol.">
        <title>Mortalin/GRP75 promotes release of membrane vesicles from immune attacked cells and protection from complement-mediated lysis.</title>
        <authorList>
            <person name="Pilzer D."/>
            <person name="Fishelson Z."/>
        </authorList>
    </citation>
    <scope>FUNCTION</scope>
</reference>
<reference key="16">
    <citation type="journal article" date="2007" name="Hum. Mol. Genet.">
        <title>Mitochondrial frataxin interacts with ISD11 of the NFS1/ISCU complex and multiple mitochondrial chaperones.</title>
        <authorList>
            <person name="Shan Y."/>
            <person name="Napoli E."/>
            <person name="Cortopassi G."/>
        </authorList>
    </citation>
    <scope>INTERACTION WITH FXN</scope>
</reference>
<reference key="17">
    <citation type="journal article" date="2008" name="J. Biol. Chem.">
        <title>The human escort protein Hep binds to the ATPase domain of mitochondrial hsp70 and regulates ATP hydrolysis.</title>
        <authorList>
            <person name="Zhai P."/>
            <person name="Stanworth C."/>
            <person name="Liu S."/>
            <person name="Silberg J.J."/>
        </authorList>
    </citation>
    <scope>FUNCTION</scope>
    <scope>CATALYTIC ACTIVITY</scope>
    <scope>ACTIVITY REGULATION</scope>
    <scope>INTERACTION WITH DNLZ</scope>
</reference>
<reference key="18">
    <citation type="journal article" date="2009" name="Science">
        <title>Lysine acetylation targets protein complexes and co-regulates major cellular functions.</title>
        <authorList>
            <person name="Choudhary C."/>
            <person name="Kumar C."/>
            <person name="Gnad F."/>
            <person name="Nielsen M.L."/>
            <person name="Rehman M."/>
            <person name="Walther T.C."/>
            <person name="Olsen J.V."/>
            <person name="Mann M."/>
        </authorList>
    </citation>
    <scope>ACETYLATION [LARGE SCALE ANALYSIS] AT LYS-135; LYS-138; LYS-143; LYS-234; LYS-288; LYS-300; LYS-567 AND LYS-646</scope>
    <scope>IDENTIFICATION BY MASS SPECTROMETRY [LARGE SCALE ANALYSIS]</scope>
</reference>
<reference key="19">
    <citation type="journal article" date="2010" name="Hum. Mol. Genet.">
        <title>Characterization of the human HSC20, an unusual DnaJ type III protein, involved in iron-sulfur cluster biogenesis.</title>
        <authorList>
            <person name="Uhrigshardt H."/>
            <person name="Singh A."/>
            <person name="Kovtunovych G."/>
            <person name="Ghosh M."/>
            <person name="Rouault T.A."/>
        </authorList>
    </citation>
    <scope>INTERACTION WITH HSCB</scope>
</reference>
<reference key="20">
    <citation type="journal article" date="2011" name="BMC Syst. Biol.">
        <title>Initial characterization of the human central proteome.</title>
        <authorList>
            <person name="Burkard T.R."/>
            <person name="Planyavsky M."/>
            <person name="Kaupe I."/>
            <person name="Breitwieser F.P."/>
            <person name="Buerckstuemmer T."/>
            <person name="Bennett K.L."/>
            <person name="Superti-Furga G."/>
            <person name="Colinge J."/>
        </authorList>
    </citation>
    <scope>IDENTIFICATION BY MASS SPECTROMETRY [LARGE SCALE ANALYSIS]</scope>
</reference>
<reference key="21">
    <citation type="journal article" date="2011" name="Blood">
        <title>Knockdown of Hspa9, a del(5q31.2) gene, results in a decrease in hematopoietic progenitors in mice.</title>
        <authorList>
            <person name="Chen T.H."/>
            <person name="Kambal A."/>
            <person name="Krysiak K."/>
            <person name="Walshauser M.A."/>
            <person name="Raju G."/>
            <person name="Tibbitts J.F."/>
            <person name="Walter M.J."/>
        </authorList>
    </citation>
    <scope>FUNCTION</scope>
</reference>
<reference key="22">
    <citation type="journal article" date="2011" name="Mol. Cell. Proteomics">
        <title>The first identification of lysine malonylation substrates and its regulatory enzyme.</title>
        <authorList>
            <person name="Peng C."/>
            <person name="Lu Z."/>
            <person name="Xie Z."/>
            <person name="Cheng Z."/>
            <person name="Chen Y."/>
            <person name="Tan M."/>
            <person name="Luo H."/>
            <person name="Zhang Y."/>
            <person name="He W."/>
            <person name="Yang K."/>
            <person name="Zwaans B.M."/>
            <person name="Tishkoff D."/>
            <person name="Ho L."/>
            <person name="Lombard D."/>
            <person name="He T.C."/>
            <person name="Dai J."/>
            <person name="Verdin E."/>
            <person name="Ye Y."/>
            <person name="Zhao Y."/>
        </authorList>
    </citation>
    <scope>MALONYLATION AT LYS-206</scope>
</reference>
<reference key="23">
    <citation type="journal article" date="2012" name="Mol. Biol. Cell">
        <title>MINOS1 is a conserved component of mitofilin complexes and required for mitochondrial function and cristae organization.</title>
        <authorList>
            <person name="Alkhaja A.K."/>
            <person name="Jans D.C."/>
            <person name="Nikolov M."/>
            <person name="Vukotic M."/>
            <person name="Lytovchenko O."/>
            <person name="Ludewig F."/>
            <person name="Schliebs W."/>
            <person name="Riedel D."/>
            <person name="Urlaub H."/>
            <person name="Jakobs S."/>
            <person name="Deckers M."/>
        </authorList>
    </citation>
    <scope>IDENTIFICATION IN THE MINOS/MITOS COMPLEX</scope>
</reference>
<reference key="24">
    <citation type="journal article" date="2012" name="Mol. Cell. Proteomics">
        <title>Systematic analysis of protein pools, isoforms, and modifications affecting turnover and subcellular localization.</title>
        <authorList>
            <person name="Ahmad Y."/>
            <person name="Boisvert F.M."/>
            <person name="Lundberg E."/>
            <person name="Uhlen M."/>
            <person name="Lamond A.I."/>
        </authorList>
    </citation>
    <scope>SUBCELLULAR LOCATION [LARGE SCALE ANALYSIS]</scope>
</reference>
<reference key="25">
    <citation type="journal article" date="2013" name="Biochem. Biophys. Res. Commun.">
        <title>Tespa1 is a novel component of mitochondria-associated endoplasmic reticulum membranes and affects mitochondrial calcium flux.</title>
        <authorList>
            <person name="Matsuzaki H."/>
            <person name="Fujimoto T."/>
            <person name="Tanaka M."/>
            <person name="Shirasawa S."/>
        </authorList>
    </citation>
    <scope>INTERACTION WITH TESPA</scope>
</reference>
<reference key="26">
    <citation type="journal article" date="2013" name="Biochem. Biophys. Res. Commun.">
        <title>Extracellular heat shock protein A9 is a novel interaction partner of podoplanin in oral squamous cell carcinoma cells.</title>
        <authorList>
            <person name="Tsuneki M."/>
            <person name="Maruyama S."/>
            <person name="Yamazaki M."/>
            <person name="Xu B."/>
            <person name="Essa A."/>
            <person name="Abe T."/>
            <person name="Babkair H."/>
            <person name="Cheng J."/>
            <person name="Yamamoto T."/>
            <person name="Saku T."/>
        </authorList>
    </citation>
    <scope>INTERACTION WITH PDPN</scope>
</reference>
<reference key="27">
    <citation type="journal article" date="2013" name="Int. J. Biol. Macromol.">
        <title>Structural and stability studies of the human mtHsp70-escort protein 1: An essential mortalin co-chaperone.</title>
        <authorList>
            <person name="Dores-Silva P.R."/>
            <person name="Minari K."/>
            <person name="Ramos C.H."/>
            <person name="Barbosa L.R."/>
            <person name="Borges J.C."/>
        </authorList>
    </citation>
    <scope>INTERACTION WITH DNLZ</scope>
</reference>
<reference key="28">
    <citation type="journal article" date="2013" name="J. Biol. Chem.">
        <title>Human mitochondrial chaperone (mtHSP70) and cysteine desulfurase (NFS1) bind preferentially to the disordered conformation, whereas co-chaperone (HSC20) binds to the structured conformation of the iron-sulfur cluster scaffold protein (ISCU).</title>
        <authorList>
            <person name="Cai K."/>
            <person name="Frederick R.O."/>
            <person name="Kim J.H."/>
            <person name="Reinen N.M."/>
            <person name="Tonelli M."/>
            <person name="Markley J.L."/>
        </authorList>
    </citation>
    <scope>INTERACTION WITH ISCU</scope>
</reference>
<reference key="29">
    <citation type="journal article" date="2013" name="J. Proteome Res.">
        <title>Toward a comprehensive characterization of a human cancer cell phosphoproteome.</title>
        <authorList>
            <person name="Zhou H."/>
            <person name="Di Palma S."/>
            <person name="Preisinger C."/>
            <person name="Peng M."/>
            <person name="Polat A.N."/>
            <person name="Heck A.J."/>
            <person name="Mohammed S."/>
        </authorList>
    </citation>
    <scope>PHOSPHORYLATION [LARGE SCALE ANALYSIS] AT THR-87 AND SER-408</scope>
    <scope>IDENTIFICATION BY MASS SPECTROMETRY [LARGE SCALE ANALYSIS]</scope>
    <source>
        <tissue>Cervix carcinoma</tissue>
        <tissue>Erythroleukemia</tissue>
    </source>
</reference>
<reference key="30">
    <citation type="journal article" date="2014" name="Cell Death Dis.">
        <title>Ubiquitin-like (UBX)-domain-containing protein, UBXN2A, promotes cell death by interfering with the p53-Mortalin interactions in colon cancer cells.</title>
        <authorList>
            <person name="Sane S."/>
            <person name="Abdullah A."/>
            <person name="Boudreau D.A."/>
            <person name="Autenried R.K."/>
            <person name="Gupta B.K."/>
            <person name="Wang X."/>
            <person name="Wang H."/>
            <person name="Schlenker E.H."/>
            <person name="Zhang D."/>
            <person name="Telleria C."/>
            <person name="Huang L."/>
            <person name="Chauhan S.C."/>
            <person name="Rezvani K."/>
        </authorList>
    </citation>
    <scope>FUNCTION</scope>
    <scope>INTERACTION WITH TP53 AND UBXN2A</scope>
    <scope>SUBCELLULAR LOCATION</scope>
</reference>
<reference key="31">
    <citation type="journal article" date="2014" name="J. Proteomics">
        <title>An enzyme assisted RP-RPLC approach for in-depth analysis of human liver phosphoproteome.</title>
        <authorList>
            <person name="Bian Y."/>
            <person name="Song C."/>
            <person name="Cheng K."/>
            <person name="Dong M."/>
            <person name="Wang F."/>
            <person name="Huang J."/>
            <person name="Sun D."/>
            <person name="Wang L."/>
            <person name="Ye M."/>
            <person name="Zou H."/>
        </authorList>
    </citation>
    <scope>IDENTIFICATION BY MASS SPECTROMETRY [LARGE SCALE ANALYSIS]</scope>
    <source>
        <tissue>Liver</tissue>
    </source>
</reference>
<reference key="32">
    <citation type="journal article" date="2014" name="Mol. Cell. Proteomics">
        <title>Immunoaffinity enrichment and mass spectrometry analysis of protein methylation.</title>
        <authorList>
            <person name="Guo A."/>
            <person name="Gu H."/>
            <person name="Zhou J."/>
            <person name="Mulhern D."/>
            <person name="Wang Y."/>
            <person name="Lee K.A."/>
            <person name="Yang V."/>
            <person name="Aguiar M."/>
            <person name="Kornhauser J."/>
            <person name="Jia X."/>
            <person name="Ren J."/>
            <person name="Beausoleil S.A."/>
            <person name="Silva J.C."/>
            <person name="Vemulapalli V."/>
            <person name="Bedford M.T."/>
            <person name="Comb M.J."/>
        </authorList>
    </citation>
    <scope>METHYLATION [LARGE SCALE ANALYSIS] AT ARG-513</scope>
    <scope>IDENTIFICATION BY MASS SPECTROMETRY [LARGE SCALE ANALYSIS]</scope>
    <source>
        <tissue>Colon carcinoma</tissue>
    </source>
</reference>
<reference key="33">
    <citation type="journal article" date="2015" name="Blood">
        <title>Congenital sideroblastic anemia due to mutations in the mitochondrial HSP70 homologue HSPA9.</title>
        <authorList>
            <person name="Schmitz-Abe K."/>
            <person name="Ciesielski S.J."/>
            <person name="Schmidt P.J."/>
            <person name="Campagna D.R."/>
            <person name="Rahimov F."/>
            <person name="Schilke B.A."/>
            <person name="Cuijpers M."/>
            <person name="Rieneck K."/>
            <person name="Lausen B."/>
            <person name="Linenberger M.L."/>
            <person name="Sendamarai A.K."/>
            <person name="Guo C."/>
            <person name="Hofmann I."/>
            <person name="Newburger P.E."/>
            <person name="Matthews D."/>
            <person name="Shimamura A."/>
            <person name="Snijders P.J."/>
            <person name="Towne M.C."/>
            <person name="Niemeyer C.M."/>
            <person name="Watson H.G."/>
            <person name="Dziegiel M.H."/>
            <person name="Heeney M.M."/>
            <person name="May A."/>
            <person name="Bottomley S.S."/>
            <person name="Swinkels D.W."/>
            <person name="Markianos K."/>
            <person name="Craig E.A."/>
            <person name="Fleming M.D."/>
        </authorList>
    </citation>
    <scope>INVOLVEMENT IN SIDBA4</scope>
    <scope>VARIANTS SIDBA4 PRO-212; SER-388; LYS-415 AND 458-ILE-ASN-459 DEL</scope>
    <scope>VARIANTS LEU-200; LYS-539; TRP-573 AND LYS-577</scope>
</reference>
<reference key="34">
    <citation type="journal article" date="2015" name="Proteomics">
        <title>N-terminome analysis of the human mitochondrial proteome.</title>
        <authorList>
            <person name="Vaca Jacome A.S."/>
            <person name="Rabilloud T."/>
            <person name="Schaeffer-Reiss C."/>
            <person name="Rompais M."/>
            <person name="Ayoub D."/>
            <person name="Lane L."/>
            <person name="Bairoch A."/>
            <person name="Van Dorsselaer A."/>
            <person name="Carapito C."/>
        </authorList>
    </citation>
    <scope>IDENTIFICATION BY MASS SPECTROMETRY [LARGE SCALE ANALYSIS]</scope>
</reference>
<reference key="35">
    <citation type="journal article" date="2015" name="Sci. Rep.">
        <title>Mutations in the heat-shock protein A9 (HSPA9) gene cause the EVEN-PLUS syndrome of congenital malformations and skeletal dysplasia.</title>
        <authorList>
            <person name="Royer-Bertrand B."/>
            <person name="Castillo-Taucher S."/>
            <person name="Moreno-Salinas R."/>
            <person name="Cho T.J."/>
            <person name="Chae J.H."/>
            <person name="Choi M."/>
            <person name="Kim O.H."/>
            <person name="Dikoglu E."/>
            <person name="Campos-Xavier B."/>
            <person name="Girardi E."/>
            <person name="Superti-Furga G."/>
            <person name="Bonafe L."/>
            <person name="Rivolta C."/>
            <person name="Unger S."/>
            <person name="Superti-Furga A."/>
        </authorList>
    </citation>
    <scope>INVOLVEMENT IN EVPLS</scope>
    <scope>VARIANTS EVPLS TRP-126 AND CYS-128</scope>
</reference>
<reference key="36">
    <citation type="journal article" date="2016" name="Cell Stress Chaperones">
        <title>Structural studies of UBXN2A and mortalin interaction and the putative role of silenced UBXN2A in preventing response to chemotherapy.</title>
        <authorList>
            <person name="Sane S."/>
            <person name="Abdullah A."/>
            <person name="Nelson M.E."/>
            <person name="Wang H."/>
            <person name="Chauhan S.C."/>
            <person name="Newton S.S."/>
            <person name="Rezvani K."/>
        </authorList>
    </citation>
    <scope>FUNCTION</scope>
    <scope>INTERACTION WITH UBXN2A</scope>
    <scope>MUTAGENESIS OF THR-441; PRO-442; LYS-555 AND ILE-558</scope>
</reference>
<reference key="37">
    <citation type="journal article" date="2015" name="PLoS ONE">
        <title>Human mitochondrial Hsp70 (mortalin): shedding light on ATPase activity, interaction with adenosine nucleotides, solution structure and domain organization.</title>
        <authorList>
            <person name="Dores-Silva P.R."/>
            <person name="Barbosa L.R."/>
            <person name="Ramos C.H."/>
            <person name="Borges J.C."/>
        </authorList>
    </citation>
    <scope>FUNCTION</scope>
    <scope>CATALYTIC ACTIVITY</scope>
</reference>
<reference key="38">
    <citation type="journal article" date="2016" name="Mitochondrion">
        <title>Mitochondrial Hspa9/Mortalin regulates erythroid differentiation via iron-sulfur cluster assembly.</title>
        <authorList>
            <person name="Shan Y."/>
            <person name="Cortopassi G."/>
        </authorList>
    </citation>
    <scope>FUNCTION</scope>
    <scope>SUBCELLULAR LOCATION</scope>
    <scope>INTERACTION WITH FXN; NFU1; NFS1 AND ISCU</scope>
    <scope>MUTAGENESIS OF GLY-489</scope>
</reference>
<reference evidence="39" key="39">
    <citation type="journal article" date="2014" name="Protein Sci.">
        <title>Crystal structure of the nucleotide-binding domain of mortalin, the mitochondrial Hsp70 chaperone.</title>
        <authorList>
            <person name="Amick J."/>
            <person name="Schlanger S.E."/>
            <person name="Wachnowsky C."/>
            <person name="Moseng M.A."/>
            <person name="Emerson C.C."/>
            <person name="Dare M."/>
            <person name="Luo W.I."/>
            <person name="Ithychanda S.S."/>
            <person name="Nix J.C."/>
            <person name="Cowan J.A."/>
            <person name="Page R.C."/>
            <person name="Misra S."/>
        </authorList>
    </citation>
    <scope>X-RAY CRYSTALLOGRAPHY (2.80 ANGSTROMS) OF 52-431</scope>
</reference>
<reference key="40">
    <citation type="journal article" date="2017" name="J. Biol. Chem.">
        <title>Regulation of mitochondrial protein import by the nucleotide exchange factors GrpEL1 and GrpEL2 in human cells.</title>
        <authorList>
            <person name="Srivastava S."/>
            <person name="Savanur M.A."/>
            <person name="Sinha D."/>
            <person name="Birje A."/>
            <person name="Vigneshwaran R."/>
            <person name="Saha P.P."/>
            <person name="D'Silva P."/>
        </authorList>
    </citation>
    <scope>FUNCTION</scope>
    <scope>ACTIVITY REGULATION</scope>
</reference>
<reference evidence="41" key="41">
    <citation type="journal article" date="2019" name="FEBS Lett.">
        <title>2- and N6-functionalized adenosine-5'-diphosphate analogs for the inhibition of mortalin.</title>
        <authorList>
            <person name="Moseng M.A."/>
            <person name="Nix J.C."/>
            <person name="Page R.C."/>
        </authorList>
    </citation>
    <scope>X-RAY CRYSTALLOGRAPHY (2.00 ANGSTROMS) OF 52-431 IN COMPLEX WITH ADP ANALOG</scope>
    <scope>FUNCTION</scope>
    <scope>CATALYTIC ACTIVITY</scope>
</reference>
<reference evidence="40" key="42">
    <citation type="journal article" date="2019" name="J. Phys. Chem. B">
        <title>Biophysical Consequences of EVEN-PLUS Syndrome Mutations for the Function of Mortalin.</title>
        <authorList>
            <person name="Moseng M.A."/>
            <person name="Nix J.C."/>
            <person name="Page R.C."/>
        </authorList>
    </citation>
    <scope>X-RAY CRYSTALLOGRAPHY (2.78 ANGSTROMS) OF 54-429 IN COMPLEX WITH ADP</scope>
    <scope>FUNCTION</scope>
    <scope>CATALYTIC ACTIVITY</scope>
    <scope>CHARACTERIZATION OF VARIANTS EVPLS TRP-126 AND CYS-128</scope>
</reference>
<accession>P38646</accession>
<accession>B2RCM1</accession>
<accession>P30036</accession>
<accession>P31932</accession>
<accession>Q1HB43</accession>
<accession>Q53H23</accession>
<accession>Q6GU03</accession>
<accession>Q9BWB7</accession>
<accession>Q9UC56</accession>
<organism>
    <name type="scientific">Homo sapiens</name>
    <name type="common">Human</name>
    <dbReference type="NCBI Taxonomy" id="9606"/>
    <lineage>
        <taxon>Eukaryota</taxon>
        <taxon>Metazoa</taxon>
        <taxon>Chordata</taxon>
        <taxon>Craniata</taxon>
        <taxon>Vertebrata</taxon>
        <taxon>Euteleostomi</taxon>
        <taxon>Mammalia</taxon>
        <taxon>Eutheria</taxon>
        <taxon>Euarchontoglires</taxon>
        <taxon>Primates</taxon>
        <taxon>Haplorrhini</taxon>
        <taxon>Catarrhini</taxon>
        <taxon>Hominidae</taxon>
        <taxon>Homo</taxon>
    </lineage>
</organism>
<sequence>MISASRAAAARLVGAAASRGPTAARHQDSWNGLSHEAFRLVSRRDYASEAIKGAVVGIDLGTTNSCVAVMEGKQAKVLENAEGARTTPSVVAFTADGERLVGMPAKRQAVTNPNNTFYATKRLIGRRYDDPEVQKDIKNVPFKIVRASNGDAWVEAHGKLYSPSQIGAFVLMKMKETAENYLGHTAKNAVITVPAYFNDSQRQATKDAGQISGLNVLRVINEPTAAALAYGLDKSEDKVIAVYDLGGGTFDISILEIQKGVFEVKSTNGDTFLGGEDFDQALLRHIVKEFKRETGVDLTKDNMALQRVREAAEKAKCELSSSVQTDINLPYLTMDSSGPKHLNMKLTRAQFEGIVTDLIRRTIAPCQKAMQDAEVSKSDIGEVILVGGMTRMPKVQQTVQDLFGRAPSKAVNPDEAVAIGAAIQGGVLAGDVTDVLLLDVTPLSLGIETLGGVFTKLINRNTTIPTKKSQVFSTAADGQTQVEIKVCQGEREMAGDNKLLGQFTLIGIPPAPRGVPQIEVTFDIDANGIVHVSAKDKGTGREQQIVIQSSGGLSKDDIENMVKNAEKYAEEDRRKKERVEAVNMAEGIIHDTETKMEEFKDQLPADECNKLKEEISKMRELLARKDSETGENIRQAASSLQQASLKLFEMAYKKMASEREGSGSSGTGEQKEDQKEEKQ</sequence>
<gene>
    <name evidence="38" type="primary">HSPA9</name>
    <name type="synonym">GRP75</name>
    <name type="synonym">HSPA9B</name>
    <name evidence="34" type="synonym">mt-HSP70</name>
</gene>
<keyword id="KW-0002">3D-structure</keyword>
<keyword id="KW-0007">Acetylation</keyword>
<keyword id="KW-0067">ATP-binding</keyword>
<keyword id="KW-0143">Chaperone</keyword>
<keyword id="KW-0963">Cytoplasm</keyword>
<keyword id="KW-0903">Direct protein sequencing</keyword>
<keyword id="KW-0225">Disease variant</keyword>
<keyword id="KW-0242">Dwarfism</keyword>
<keyword id="KW-0378">Hydrolase</keyword>
<keyword id="KW-0488">Methylation</keyword>
<keyword id="KW-0496">Mitochondrion</keyword>
<keyword id="KW-0547">Nucleotide-binding</keyword>
<keyword id="KW-0539">Nucleus</keyword>
<keyword id="KW-0597">Phosphoprotein</keyword>
<keyword id="KW-1267">Proteomics identification</keyword>
<keyword id="KW-1185">Reference proteome</keyword>
<keyword id="KW-0809">Transit peptide</keyword>
<comment type="function">
    <text evidence="1 4 10 12 14 22 23 26 27 28 29 30">Mitochondrial chaperone that plays a key role in mitochondrial protein import, folding, and assembly. Plays an essential role in the protein quality control system, the correct folding of proteins, the re-folding of misfolded proteins, and the targeting of proteins for subsequent degradation. These processes are achieved through cycles of ATP binding, ATP hydrolysis, and ADP release, mediated by co-chaperones (PubMed:18632665, PubMed:25615450, PubMed:28848044, PubMed:30933555, PubMed:31177526). In mitochondria, it associates with the TIM (translocase of the inner membrane) protein complex to assist in the import and folding of mitochondrial proteins (By similarity). Plays an important role in mitochondrial iron-sulfur cluster (ISC) biogenesis, interacts with and stabilizes ISC cluster assembly proteins FXN, NFU1, NFS1 and ISCU (PubMed:26702583). Regulates erythropoiesis via stabilization of ISC assembly (PubMed:21123823, PubMed:26702583). Regulates mitochondrial calcium-dependent apoptosis by coupling two calcium channels, ITPR1 and VDAC1, at the mitochondria-associated endoplasmic reticulum (ER) membrane to facilitate calcium transport from the ER lumen to the mitochondria intermembrane space, providing calcium for the downstream calcium channel MCU, which releases it into the mitochondrial matrix (By similarity). Although primarily located in the mitochondria, it is also found in other cellular compartments. In the cytosol, it associates with proteins involved in signaling, apoptosis, or senescence. It may play a role in cell cycle regulation via its interaction with and promotion of degradation of TP53 (PubMed:24625977, PubMed:26634371). May play a role in the control of cell proliferation and cellular aging (By similarity). Protects against reactive oxygen species (ROS) (By similarity). Extracellular HSPA9 plays a cytoprotective role by preventing cell lysis following immune attack by the membrane attack complex by disrupting formation of the complex (PubMed:16091382).</text>
</comment>
<comment type="catalytic activity">
    <reaction evidence="12 23 29 30">
        <text>ATP + H2O = ADP + phosphate + H(+)</text>
        <dbReference type="Rhea" id="RHEA:13065"/>
        <dbReference type="ChEBI" id="CHEBI:15377"/>
        <dbReference type="ChEBI" id="CHEBI:15378"/>
        <dbReference type="ChEBI" id="CHEBI:30616"/>
        <dbReference type="ChEBI" id="CHEBI:43474"/>
        <dbReference type="ChEBI" id="CHEBI:456216"/>
        <dbReference type="EC" id="3.6.4.10"/>
    </reaction>
    <physiologicalReaction direction="left-to-right" evidence="37">
        <dbReference type="Rhea" id="RHEA:13066"/>
    </physiologicalReaction>
</comment>
<comment type="activity regulation">
    <text evidence="3 12 28">The chaperone activity is regulated by ATP-induced allosteric coupling of the nucleotide-binding (NBD) and substrate-binding (SBD) domains. ATP binding in the NBD leads to a conformational change in the NBD, which is transferred through the interdomain linker (IDL) to the substrate-binding domain (SBD). This elicits a reduced substrate affinity and a faster substrate exchange rate. Upon hydrolysis of ATP to ADP, the protein undergoes a conformational change that increases its affinity for substrate proteins. It cycles through repeated phases of ATP hydrolysis and nucleotide exchange, facilitating repeated cycles of substrate binding and release (By similarity). Functions in collaboration with co-chaperones. Functions with the co-chaperone, DNLZ, to maintain solubility and regulate ATP hydrolysis (PubMed:18632665). Nucleotide exchange factors, GRPEL1 and GRPEL2, accelerate nucleotide exchange (PubMed:28848044).</text>
</comment>
<comment type="subunit">
    <text evidence="5 7 11 12 13 17 18 19 20 21 22 26 27">Interacts strongly with the intermediate form of FXN and weakly with its mature form (PubMed:17331979, PubMed:26702583). Interacts with HSCB (PubMed:20668094). Associates with the mitochondrial contact site and cristae organizing system (MICOS) complex, composed of at least MICOS10/MIC10, CHCHD3/MIC19, CHCHD6/MIC25, APOOL/MIC27, IMMT/MIC60, APOO/MIC23/MIC26 and QIL1/MIC13. This complex was also known under the names MINOS or MitOS complex. The MICOS complex associates with mitochondrial outer membrane proteins SAMM50, MTX1, MTX2 and DNAJC11, mitochondrial inner membrane protein TMEM11 and with HSPA9 (PubMed:22114354). Interacts with DNLZ, the interaction is required to prevent self-aggregation (PubMed:23462535, PubMed:18632665). Interacts with TESPA1 (PubMed:23501103). Interacts with PDPN (PubMed:23541579). Interacts with NFU1, NFS1 and ISCU (PubMed:26702583). Interacts with TP53; the interaction promotes TP53 degradation (PubMed:24625977). Interacts (via SBD domain) with UBXN2A; the interaction with UBXN2A inhibits HSPA9 interaction with and degradation of TP53, thereby promotes TP53 translocation to the nucleus (PubMed:24625977, PubMed:26634371). Interacts with ITPR1 AND VDAC1; this interaction couples ITPR1 to VDAC1 (By similarity). Component of the TIM23 mitochondrial inner membrane pre-sequence translocase complex (PubMed:10339406).</text>
</comment>
<comment type="interaction">
    <interactant intactId="EBI-354932">
        <id>P38646</id>
    </interactant>
    <interactant intactId="EBI-10307465">
        <id>Q9H6A0</id>
        <label>DENND2D</label>
    </interactant>
    <organismsDiffer>false</organismsDiffer>
    <experiments>3</experiments>
</comment>
<comment type="interaction">
    <interactant intactId="EBI-354932">
        <id>P38646</id>
    </interactant>
    <interactant intactId="EBI-297353">
        <id>P00533</id>
        <label>EGFR</label>
    </interactant>
    <organismsDiffer>false</organismsDiffer>
    <experiments>5</experiments>
</comment>
<comment type="interaction">
    <interactant intactId="EBI-354932">
        <id>P38646</id>
    </interactant>
    <interactant intactId="EBI-2806519">
        <id>Q8TDU6</id>
        <label>GPBAR1</label>
    </interactant>
    <organismsDiffer>false</organismsDiffer>
    <experiments>3</experiments>
</comment>
<comment type="interaction">
    <interactant intactId="EBI-354932">
        <id>P38646</id>
    </interactant>
    <interactant intactId="EBI-1043499">
        <id>Q9HAV7</id>
        <label>GRPEL1</label>
    </interactant>
    <organismsDiffer>false</organismsDiffer>
    <experiments>5</experiments>
</comment>
<comment type="interaction">
    <interactant intactId="EBI-354932">
        <id>P38646</id>
    </interactant>
    <interactant intactId="EBI-1805738">
        <id>Q8IWL3</id>
        <label>HSCB</label>
    </interactant>
    <organismsDiffer>false</organismsDiffer>
    <experiments>14</experiments>
</comment>
<comment type="interaction">
    <interactant intactId="EBI-354932">
        <id>P38646</id>
    </interactant>
    <interactant intactId="EBI-347721">
        <id>Q8WX92</id>
        <label>NELFB</label>
    </interactant>
    <organismsDiffer>false</organismsDiffer>
    <experiments>2</experiments>
</comment>
<comment type="interaction">
    <interactant intactId="EBI-354932">
        <id>P38646</id>
    </interactant>
    <interactant intactId="EBI-2804080">
        <id>Q99650</id>
        <label>OSMR</label>
    </interactant>
    <organismsDiffer>false</organismsDiffer>
    <experiments>4</experiments>
</comment>
<comment type="interaction">
    <interactant intactId="EBI-354932">
        <id>P38646</id>
    </interactant>
    <interactant intactId="EBI-366083">
        <id>P04637</id>
        <label>TP53</label>
    </interactant>
    <organismsDiffer>false</organismsDiffer>
    <experiments>6</experiments>
</comment>
<comment type="interaction">
    <interactant intactId="EBI-354932">
        <id>P38646</id>
    </interactant>
    <interactant intactId="EBI-389606">
        <id>O15350</id>
        <label>TP73</label>
    </interactant>
    <organismsDiffer>false</organismsDiffer>
    <experiments>11</experiments>
</comment>
<comment type="interaction">
    <interactant intactId="EBI-354932">
        <id>P38646</id>
    </interactant>
    <interactant intactId="EBI-1783169">
        <id>P13693</id>
        <label>TPT1</label>
    </interactant>
    <organismsDiffer>false</organismsDiffer>
    <experiments>4</experiments>
</comment>
<comment type="interaction">
    <interactant intactId="EBI-354932">
        <id>P38646</id>
    </interactant>
    <interactant intactId="EBI-10173443">
        <id>A4D2J0</id>
        <label>YKT6</label>
    </interactant>
    <organismsDiffer>false</organismsDiffer>
    <experiments>3</experiments>
</comment>
<comment type="subcellular location">
    <subcellularLocation>
        <location evidence="16 27">Mitochondrion</location>
    </subcellularLocation>
    <subcellularLocation>
        <location evidence="16 22">Nucleus</location>
        <location evidence="16 22">Nucleolus</location>
    </subcellularLocation>
    <subcellularLocation>
        <location evidence="22">Cytoplasm</location>
    </subcellularLocation>
    <subcellularLocation>
        <location evidence="5">Mitochondrion matrix</location>
    </subcellularLocation>
    <text evidence="5">Found in a complex with HSPA9 and VDAC1 at the endoplasmic reticulum-mitochondria contact sites.</text>
</comment>
<comment type="domain">
    <text evidence="2">The N-terminal nucleotide binding domain (NBD) is responsible for binding and hydrolyzing ATP. The C-terminal substrate-binding domain (SBD) binds to the client/substrate proteins. The two domains are allosterically coupled so that, when ATP is bound to the NBD, the SBD binds relatively weakly to clients. When ADP is bound in the NBD, a conformational change enhances the affinity of the SBD for client proteins.</text>
</comment>
<comment type="disease" evidence="24">
    <disease id="DI-04677">
        <name>Anemia, sideroblastic, 4</name>
        <acronym>SIDBA4</acronym>
        <description>A form of sideroblastic anemia, a bone marrow disorder defined by the presence of pathologic iron deposits in erythroblast mitochondria. Sideroblastic anemia is characterized by anemia of varying severity, hypochromic peripheral erythrocytes, systemic iron overload secondary to chronic ineffective erythropoiesis, and the presence of bone marrow ringed sideroblasts. Sideroblasts are characterized by iron-loaded mitochondria clustered around the nucleus. SIDBA4 has been reported to be inherited as an autosomal recessive disease, with a pseudodominant pattern of inheritance in some families.</description>
        <dbReference type="MIM" id="182170"/>
    </disease>
    <text>The disease is caused by variants affecting the gene represented in this entry.</text>
</comment>
<comment type="disease" evidence="25 29">
    <disease id="DI-04676">
        <name>Even-plus syndrome</name>
        <acronym>EVPLS</acronym>
        <description>An autosomal recessive syndrome characterized by epiphyseal and vertebral dysplasia, prenatal-onset short stature, a distinct craniofacial phenotype with microtia, a flat facial profile with flat nose and triangular nares, cardiac malformations, and additional findings such as anal atresia, hypodontia, aplasia cutis, and others.</description>
        <dbReference type="MIM" id="616854"/>
    </disease>
    <text>The disease is caused by variants affecting the gene represented in this entry.</text>
</comment>
<comment type="similarity">
    <text evidence="36">Belongs to the heat shock protein 70 family.</text>
</comment>
<feature type="transit peptide" description="Mitochondrion" evidence="8 31 32">
    <location>
        <begin position="1"/>
        <end position="46"/>
    </location>
</feature>
<feature type="chain" id="PRO_0000013563" description="Stress-70 protein, mitochondrial">
    <location>
        <begin position="47"/>
        <end position="679"/>
    </location>
</feature>
<feature type="region of interest" description="Interaction with NFS1" evidence="27">
    <location>
        <begin position="1"/>
        <end position="432"/>
    </location>
</feature>
<feature type="region of interest" description="Nucleotide-binding domain (NBD)" evidence="35">
    <location>
        <begin position="63"/>
        <end position="431"/>
    </location>
</feature>
<feature type="region of interest" description="Interaction with FXN and ISCU" evidence="27">
    <location>
        <begin position="432"/>
        <end position="679"/>
    </location>
</feature>
<feature type="region of interest" description="Interdomain linker" evidence="35">
    <location>
        <begin position="432"/>
        <end position="441"/>
    </location>
</feature>
<feature type="region of interest" description="Substrate-binding domain (SBD)" evidence="35">
    <location>
        <begin position="442"/>
        <end position="679"/>
    </location>
</feature>
<feature type="region of interest" description="Disordered" evidence="6">
    <location>
        <begin position="656"/>
        <end position="679"/>
    </location>
</feature>
<feature type="compositionally biased region" description="Basic and acidic residues" evidence="6">
    <location>
        <begin position="669"/>
        <end position="679"/>
    </location>
</feature>
<feature type="binding site" evidence="29 40">
    <location>
        <position position="63"/>
    </location>
    <ligand>
        <name>ADP</name>
        <dbReference type="ChEBI" id="CHEBI:456216"/>
    </ligand>
</feature>
<feature type="binding site" evidence="29 40">
    <location>
        <position position="64"/>
    </location>
    <ligand>
        <name>ADP</name>
        <dbReference type="ChEBI" id="CHEBI:456216"/>
    </ligand>
</feature>
<feature type="binding site" evidence="29 40">
    <location>
        <position position="313"/>
    </location>
    <ligand>
        <name>ADP</name>
        <dbReference type="ChEBI" id="CHEBI:456216"/>
    </ligand>
</feature>
<feature type="binding site" evidence="29 40">
    <location>
        <position position="316"/>
    </location>
    <ligand>
        <name>ADP</name>
        <dbReference type="ChEBI" id="CHEBI:456216"/>
    </ligand>
</feature>
<feature type="binding site" evidence="29 40">
    <location>
        <position position="320"/>
    </location>
    <ligand>
        <name>ADP</name>
        <dbReference type="ChEBI" id="CHEBI:456216"/>
    </ligand>
</feature>
<feature type="binding site" evidence="29 40">
    <location>
        <position position="388"/>
    </location>
    <ligand>
        <name>ADP</name>
        <dbReference type="ChEBI" id="CHEBI:456216"/>
    </ligand>
</feature>
<feature type="binding site" evidence="29 40">
    <location>
        <position position="391"/>
    </location>
    <ligand>
        <name>ADP</name>
        <dbReference type="ChEBI" id="CHEBI:456216"/>
    </ligand>
</feature>
<feature type="modified residue" description="N6-acetyllysine" evidence="4">
    <location>
        <position position="76"/>
    </location>
</feature>
<feature type="modified residue" description="Phosphothreonine" evidence="43">
    <location>
        <position position="87"/>
    </location>
</feature>
<feature type="modified residue" description="N6-acetyllysine; alternate" evidence="42">
    <location>
        <position position="135"/>
    </location>
</feature>
<feature type="modified residue" description="N6-succinyllysine; alternate" evidence="4">
    <location>
        <position position="135"/>
    </location>
</feature>
<feature type="modified residue" description="N6-acetyllysine; alternate" evidence="42">
    <location>
        <position position="138"/>
    </location>
</feature>
<feature type="modified residue" description="N6-succinyllysine; alternate" evidence="4">
    <location>
        <position position="138"/>
    </location>
</feature>
<feature type="modified residue" description="N6-acetyllysine" evidence="42">
    <location>
        <position position="143"/>
    </location>
</feature>
<feature type="modified residue" description="N6-acetyllysine; alternate" evidence="4">
    <location>
        <position position="206"/>
    </location>
</feature>
<feature type="modified residue" description="N6-malonyllysine; alternate" evidence="15">
    <location>
        <position position="206"/>
    </location>
</feature>
<feature type="modified residue" description="N6-succinyllysine; alternate" evidence="4">
    <location>
        <position position="206"/>
    </location>
</feature>
<feature type="modified residue" description="N6-acetyllysine" evidence="42">
    <location>
        <position position="234"/>
    </location>
</feature>
<feature type="modified residue" description="N6-acetyllysine" evidence="42">
    <location>
        <position position="288"/>
    </location>
</feature>
<feature type="modified residue" description="N6-acetyllysine; alternate" evidence="42">
    <location>
        <position position="300"/>
    </location>
</feature>
<feature type="modified residue" description="N6-succinyllysine; alternate" evidence="4">
    <location>
        <position position="300"/>
    </location>
</feature>
<feature type="modified residue" description="N6-succinyllysine" evidence="4">
    <location>
        <position position="368"/>
    </location>
</feature>
<feature type="modified residue" description="N6-succinyllysine" evidence="4">
    <location>
        <position position="394"/>
    </location>
</feature>
<feature type="modified residue" description="Phosphoserine" evidence="43">
    <location>
        <position position="408"/>
    </location>
</feature>
<feature type="modified residue" description="Omega-N-methylarginine" evidence="44">
    <location>
        <position position="513"/>
    </location>
</feature>
<feature type="modified residue" description="N6-acetyllysine; alternate" evidence="42">
    <location>
        <position position="567"/>
    </location>
</feature>
<feature type="modified residue" description="N6-succinyllysine; alternate" evidence="4">
    <location>
        <position position="567"/>
    </location>
</feature>
<feature type="modified residue" description="N6-acetyllysine; alternate" evidence="4">
    <location>
        <position position="600"/>
    </location>
</feature>
<feature type="modified residue" description="N6-succinyllysine; alternate" evidence="4">
    <location>
        <position position="600"/>
    </location>
</feature>
<feature type="modified residue" description="N6-succinyllysine" evidence="4">
    <location>
        <position position="610"/>
    </location>
</feature>
<feature type="modified residue" description="N6-acetyllysine" evidence="4">
    <location>
        <position position="612"/>
    </location>
</feature>
<feature type="modified residue" description="N6-acetyllysine; alternate" evidence="42">
    <location>
        <position position="646"/>
    </location>
</feature>
<feature type="modified residue" description="N6-succinyllysine; alternate" evidence="4">
    <location>
        <position position="646"/>
    </location>
</feature>
<feature type="sequence variant" id="VAR_046482" description="In dbSNP:rs17856004." evidence="9">
    <original>Q</original>
    <variation>R</variation>
    <location>
        <position position="74"/>
    </location>
</feature>
<feature type="sequence variant" id="VAR_076662" description="In EVPLS; impairs ATP hydrolysis activity. Impairs thermostability. Increases the propensity for aggregation; dbSNP:rs751478142." evidence="25 29">
    <original>R</original>
    <variation>W</variation>
    <location>
        <position position="126"/>
    </location>
</feature>
<feature type="sequence variant" id="VAR_049622" description="In dbSNP:rs35091799.">
    <original>R</original>
    <variation>G</variation>
    <location>
        <position position="127"/>
    </location>
</feature>
<feature type="sequence variant" id="VAR_076663" description="In EVPLS; impairs ATP hydrolysis activity. Impairs thermostability. Increases the propensity for aggregation; dbSNP:rs765368797." evidence="25 29">
    <original>Y</original>
    <variation>C</variation>
    <location>
        <position position="128"/>
    </location>
</feature>
<feature type="sequence variant" id="VAR_046483" evidence="33">
    <original>H</original>
    <variation>Y</variation>
    <location>
        <position position="184"/>
    </location>
</feature>
<feature type="sequence variant" id="VAR_076664" description="In dbSNP:rs199715716." evidence="24">
    <original>S</original>
    <variation>L</variation>
    <location>
        <position position="200"/>
    </location>
</feature>
<feature type="sequence variant" id="VAR_076665" description="In SIDBA4; uncertain significance; dbSNP:rs768283289." evidence="24">
    <original>S</original>
    <variation>P</variation>
    <location>
        <position position="212"/>
    </location>
</feature>
<feature type="sequence variant" id="VAR_049623" description="In dbSNP:rs34558740.">
    <original>A</original>
    <variation>G</variation>
    <location>
        <position position="225"/>
    </location>
</feature>
<feature type="sequence variant" id="VAR_076666" description="In SIDBA4; uncertain significance." evidence="24">
    <original>G</original>
    <variation>S</variation>
    <location>
        <position position="388"/>
    </location>
</feature>
<feature type="sequence variant" id="VAR_076667" description="In SIDBA4; uncertain significance." evidence="24">
    <original>E</original>
    <variation>K</variation>
    <location>
        <position position="415"/>
    </location>
</feature>
<feature type="sequence variant" id="VAR_076668" description="In SIDBA4." evidence="24">
    <location>
        <begin position="458"/>
        <end position="459"/>
    </location>
</feature>
<feature type="sequence variant" id="VAR_076669" evidence="24">
    <original>T</original>
    <variation>K</variation>
    <location>
        <position position="539"/>
    </location>
</feature>
<feature type="sequence variant" id="VAR_076670" description="In dbSNP:rs147723579." evidence="24">
    <original>R</original>
    <variation>W</variation>
    <location>
        <position position="573"/>
    </location>
</feature>
<feature type="sequence variant" id="VAR_076671" description="In dbSNP:rs905439101." evidence="24">
    <original>E</original>
    <variation>K</variation>
    <location>
        <position position="577"/>
    </location>
</feature>
<feature type="mutagenesis site" description="No effect on interaction with UBXN2A." evidence="26">
    <original>T</original>
    <variation>A</variation>
    <location>
        <position position="441"/>
    </location>
</feature>
<feature type="mutagenesis site" description="Abolishes interaction with UBXN2A." evidence="26">
    <original>P</original>
    <variation>A</variation>
    <location>
        <position position="442"/>
    </location>
</feature>
<feature type="mutagenesis site" description="Significant loss of interaction with FXN and ISCU. Significant increase in interaction with NFS1." evidence="27">
    <original>G</original>
    <variation>E</variation>
    <location>
        <position position="489"/>
    </location>
</feature>
<feature type="mutagenesis site" description="Reduces interaction with UBXN2A." evidence="26">
    <original>K</original>
    <variation>A</variation>
    <location>
        <position position="555"/>
    </location>
</feature>
<feature type="mutagenesis site" description="Abolishes interaction with UBXN2A." evidence="26">
    <original>I</original>
    <variation>A</variation>
    <location>
        <position position="558"/>
    </location>
</feature>
<feature type="sequence conflict" description="In Ref. 9; AA sequence." evidence="36" ref="9">
    <original>S</original>
    <variation>P</variation>
    <location>
        <position position="48"/>
    </location>
</feature>
<feature type="sequence conflict" description="In Ref. 9; AA sequence." evidence="36" ref="9">
    <original>C</original>
    <variation>S</variation>
    <location>
        <position position="66"/>
    </location>
</feature>
<feature type="sequence conflict" description="In Ref. 3; BAG37618." evidence="36" ref="3">
    <original>E</original>
    <variation>V</variation>
    <location>
        <position position="176"/>
    </location>
</feature>
<feature type="sequence conflict" description="In Ref. 7; AAH00478/AAH24034." evidence="36" ref="7">
    <original>H</original>
    <variation>R</variation>
    <location>
        <position position="184"/>
    </location>
</feature>
<feature type="sequence conflict" description="In Ref. 4; BAD96478." evidence="36" ref="4">
    <original>T</original>
    <variation>A</variation>
    <location>
        <position position="249"/>
    </location>
</feature>
<feature type="sequence conflict" description="In Ref. 4; BAD96478." evidence="36" ref="4">
    <original>L</original>
    <variation>P</variation>
    <location>
        <position position="385"/>
    </location>
</feature>
<feature type="sequence conflict" description="In Ref. 2; AAA67526." evidence="36" ref="2">
    <original>G</original>
    <variation>R</variation>
    <location>
        <position position="540"/>
    </location>
</feature>
<feature type="strand" evidence="47">
    <location>
        <begin position="55"/>
        <end position="59"/>
    </location>
</feature>
<feature type="strand" evidence="47">
    <location>
        <begin position="62"/>
        <end position="71"/>
    </location>
</feature>
<feature type="strand" evidence="47">
    <location>
        <begin position="74"/>
        <end position="77"/>
    </location>
</feature>
<feature type="strand" evidence="47">
    <location>
        <begin position="85"/>
        <end position="88"/>
    </location>
</feature>
<feature type="strand" evidence="47">
    <location>
        <begin position="90"/>
        <end position="93"/>
    </location>
</feature>
<feature type="strand" evidence="46">
    <location>
        <begin position="95"/>
        <end position="97"/>
    </location>
</feature>
<feature type="strand" evidence="47">
    <location>
        <begin position="99"/>
        <end position="102"/>
    </location>
</feature>
<feature type="helix" evidence="47">
    <location>
        <begin position="103"/>
        <end position="106"/>
    </location>
</feature>
<feature type="turn" evidence="47">
    <location>
        <begin position="107"/>
        <end position="111"/>
    </location>
</feature>
<feature type="helix" evidence="47">
    <location>
        <begin position="113"/>
        <end position="115"/>
    </location>
</feature>
<feature type="strand" evidence="47">
    <location>
        <begin position="116"/>
        <end position="118"/>
    </location>
</feature>
<feature type="helix" evidence="47">
    <location>
        <begin position="120"/>
        <end position="122"/>
    </location>
</feature>
<feature type="turn" evidence="47">
    <location>
        <begin position="123"/>
        <end position="125"/>
    </location>
</feature>
<feature type="helix" evidence="47">
    <location>
        <begin position="131"/>
        <end position="139"/>
    </location>
</feature>
<feature type="strand" evidence="47">
    <location>
        <begin position="142"/>
        <end position="146"/>
    </location>
</feature>
<feature type="strand" evidence="47">
    <location>
        <begin position="150"/>
        <end position="156"/>
    </location>
</feature>
<feature type="strand" evidence="47">
    <location>
        <begin position="159"/>
        <end position="161"/>
    </location>
</feature>
<feature type="helix" evidence="47">
    <location>
        <begin position="163"/>
        <end position="182"/>
    </location>
</feature>
<feature type="strand" evidence="47">
    <location>
        <begin position="188"/>
        <end position="193"/>
    </location>
</feature>
<feature type="helix" evidence="47">
    <location>
        <begin position="199"/>
        <end position="211"/>
    </location>
</feature>
<feature type="strand" evidence="47">
    <location>
        <begin position="215"/>
        <end position="221"/>
    </location>
</feature>
<feature type="helix" evidence="47">
    <location>
        <begin position="222"/>
        <end position="229"/>
    </location>
</feature>
<feature type="helix" evidence="47">
    <location>
        <begin position="232"/>
        <end position="234"/>
    </location>
</feature>
<feature type="strand" evidence="47">
    <location>
        <begin position="236"/>
        <end position="245"/>
    </location>
</feature>
<feature type="strand" evidence="47">
    <location>
        <begin position="250"/>
        <end position="258"/>
    </location>
</feature>
<feature type="strand" evidence="47">
    <location>
        <begin position="261"/>
        <end position="270"/>
    </location>
</feature>
<feature type="helix" evidence="47">
    <location>
        <begin position="275"/>
        <end position="293"/>
    </location>
</feature>
<feature type="helix" evidence="48">
    <location>
        <begin position="298"/>
        <end position="300"/>
    </location>
</feature>
<feature type="helix" evidence="47">
    <location>
        <begin position="302"/>
        <end position="318"/>
    </location>
</feature>
<feature type="turn" evidence="47">
    <location>
        <begin position="319"/>
        <end position="321"/>
    </location>
</feature>
<feature type="strand" evidence="47">
    <location>
        <begin position="323"/>
        <end position="334"/>
    </location>
</feature>
<feature type="strand" evidence="47">
    <location>
        <begin position="339"/>
        <end position="347"/>
    </location>
</feature>
<feature type="helix" evidence="47">
    <location>
        <begin position="348"/>
        <end position="354"/>
    </location>
</feature>
<feature type="helix" evidence="47">
    <location>
        <begin position="356"/>
        <end position="360"/>
    </location>
</feature>
<feature type="helix" evidence="47">
    <location>
        <begin position="363"/>
        <end position="372"/>
    </location>
</feature>
<feature type="turn" evidence="47">
    <location>
        <begin position="377"/>
        <end position="379"/>
    </location>
</feature>
<feature type="strand" evidence="47">
    <location>
        <begin position="382"/>
        <end position="387"/>
    </location>
</feature>
<feature type="helix" evidence="47">
    <location>
        <begin position="388"/>
        <end position="391"/>
    </location>
</feature>
<feature type="helix" evidence="47">
    <location>
        <begin position="393"/>
        <end position="403"/>
    </location>
</feature>
<feature type="turn" evidence="47">
    <location>
        <begin position="413"/>
        <end position="415"/>
    </location>
</feature>
<feature type="helix" evidence="47">
    <location>
        <begin position="416"/>
        <end position="428"/>
    </location>
</feature>
<feature type="strand" evidence="45">
    <location>
        <begin position="445"/>
        <end position="448"/>
    </location>
</feature>
<feature type="strand" evidence="45">
    <location>
        <begin position="452"/>
        <end position="458"/>
    </location>
</feature>
<feature type="strand" evidence="45">
    <location>
        <begin position="463"/>
        <end position="472"/>
    </location>
</feature>
<feature type="strand" evidence="45">
    <location>
        <begin position="482"/>
        <end position="490"/>
    </location>
</feature>
<feature type="helix" evidence="45">
    <location>
        <begin position="494"/>
        <end position="496"/>
    </location>
</feature>
<feature type="strand" evidence="45">
    <location>
        <begin position="497"/>
        <end position="505"/>
    </location>
</feature>
<feature type="strand" evidence="45">
    <location>
        <begin position="518"/>
        <end position="524"/>
    </location>
</feature>
<feature type="strand" evidence="45">
    <location>
        <begin position="530"/>
        <end position="536"/>
    </location>
</feature>
<feature type="turn" evidence="45">
    <location>
        <begin position="537"/>
        <end position="539"/>
    </location>
</feature>
<feature type="strand" evidence="45">
    <location>
        <begin position="542"/>
        <end position="548"/>
    </location>
</feature>
<feature type="helix" evidence="45">
    <location>
        <begin position="555"/>
        <end position="567"/>
    </location>
</feature>
<feature type="helix" evidence="45">
    <location>
        <begin position="569"/>
        <end position="590"/>
    </location>
</feature>
<protein>
    <recommendedName>
        <fullName evidence="36">Stress-70 protein, mitochondrial</fullName>
        <ecNumber evidence="12 23 29 30">3.6.4.10</ecNumber>
    </recommendedName>
    <alternativeName>
        <fullName>75 kDa glucose-regulated protein</fullName>
        <shortName>GRP-75</shortName>
    </alternativeName>
    <alternativeName>
        <fullName>Heat shock 70 kDa protein 9</fullName>
    </alternativeName>
    <alternativeName>
        <fullName>Heat shock protein family A member 9</fullName>
    </alternativeName>
    <alternativeName>
        <fullName>Mortalin</fullName>
        <shortName>MOT</shortName>
    </alternativeName>
    <alternativeName>
        <fullName>Peptide-binding protein 74</fullName>
        <shortName>PBP74</shortName>
    </alternativeName>
</protein>
<dbReference type="EC" id="3.6.4.10" evidence="12 23 29 30"/>
<dbReference type="EMBL" id="L11066">
    <property type="status" value="NOT_ANNOTATED_CDS"/>
    <property type="molecule type" value="mRNA"/>
</dbReference>
<dbReference type="EMBL" id="L15189">
    <property type="protein sequence ID" value="AAA67526.1"/>
    <property type="molecule type" value="mRNA"/>
</dbReference>
<dbReference type="EMBL" id="AK315177">
    <property type="protein sequence ID" value="BAG37618.1"/>
    <property type="molecule type" value="mRNA"/>
</dbReference>
<dbReference type="EMBL" id="AK222758">
    <property type="protein sequence ID" value="BAD96478.1"/>
    <property type="molecule type" value="mRNA"/>
</dbReference>
<dbReference type="EMBL" id="DQ531046">
    <property type="protein sequence ID" value="ABF50973.1"/>
    <property type="molecule type" value="Genomic_DNA"/>
</dbReference>
<dbReference type="EMBL" id="CH471062">
    <property type="protein sequence ID" value="EAW62129.1"/>
    <property type="molecule type" value="Genomic_DNA"/>
</dbReference>
<dbReference type="EMBL" id="BC000478">
    <property type="protein sequence ID" value="AAH00478.1"/>
    <property type="molecule type" value="mRNA"/>
</dbReference>
<dbReference type="EMBL" id="BC024034">
    <property type="protein sequence ID" value="AAH24034.1"/>
    <property type="molecule type" value="mRNA"/>
</dbReference>
<dbReference type="CCDS" id="CCDS4208.1"/>
<dbReference type="PIR" id="B48127">
    <property type="entry name" value="B48127"/>
</dbReference>
<dbReference type="RefSeq" id="NP_004125.3">
    <property type="nucleotide sequence ID" value="NM_004134.6"/>
</dbReference>
<dbReference type="PDB" id="3N8E">
    <property type="method" value="X-ray"/>
    <property type="resolution" value="2.80 A"/>
    <property type="chains" value="A/B=439-597"/>
</dbReference>
<dbReference type="PDB" id="4KBO">
    <property type="method" value="X-ray"/>
    <property type="resolution" value="2.80 A"/>
    <property type="chains" value="A=52-431"/>
</dbReference>
<dbReference type="PDB" id="6NHK">
    <property type="method" value="X-ray"/>
    <property type="resolution" value="2.78 A"/>
    <property type="chains" value="A/B=54-429"/>
</dbReference>
<dbReference type="PDB" id="6P2U">
    <property type="method" value="X-ray"/>
    <property type="resolution" value="2.00 A"/>
    <property type="chains" value="A=52-431"/>
</dbReference>
<dbReference type="PDB" id="6PMT">
    <property type="method" value="X-ray"/>
    <property type="resolution" value="2.30 A"/>
    <property type="chains" value="A=52-431"/>
</dbReference>
<dbReference type="PDB" id="9BLS">
    <property type="method" value="EM"/>
    <property type="resolution" value="2.96 A"/>
    <property type="chains" value="A=46-639"/>
</dbReference>
<dbReference type="PDB" id="9BLT">
    <property type="method" value="EM"/>
    <property type="resolution" value="3.38 A"/>
    <property type="chains" value="A=46-639"/>
</dbReference>
<dbReference type="PDB" id="9BLU">
    <property type="method" value="EM"/>
    <property type="resolution" value="3.38 A"/>
    <property type="chains" value="A=46-559"/>
</dbReference>
<dbReference type="PDBsum" id="3N8E"/>
<dbReference type="PDBsum" id="4KBO"/>
<dbReference type="PDBsum" id="6NHK"/>
<dbReference type="PDBsum" id="6P2U"/>
<dbReference type="PDBsum" id="6PMT"/>
<dbReference type="PDBsum" id="9BLS"/>
<dbReference type="PDBsum" id="9BLT"/>
<dbReference type="PDBsum" id="9BLU"/>
<dbReference type="EMDB" id="EMD-44675"/>
<dbReference type="EMDB" id="EMD-44676"/>
<dbReference type="EMDB" id="EMD-44677"/>
<dbReference type="SMR" id="P38646"/>
<dbReference type="BioGRID" id="109545">
    <property type="interactions" value="757"/>
</dbReference>
<dbReference type="ComplexPortal" id="CPX-6129">
    <property type="entry name" value="TIM23 mitochondrial inner membrane pre-sequence translocase complex, TIM17A variant"/>
</dbReference>
<dbReference type="ComplexPortal" id="CPX-6130">
    <property type="entry name" value="TIM23 mitochondrial inner membrane pre-sequence translocase complex, TIM17B variant"/>
</dbReference>
<dbReference type="CORUM" id="P38646"/>
<dbReference type="DIP" id="DIP-32936N"/>
<dbReference type="FunCoup" id="P38646">
    <property type="interactions" value="1928"/>
</dbReference>
<dbReference type="IntAct" id="P38646">
    <property type="interactions" value="235"/>
</dbReference>
<dbReference type="MINT" id="P38646"/>
<dbReference type="STRING" id="9606.ENSP00000297185"/>
<dbReference type="BindingDB" id="P38646"/>
<dbReference type="ChEMBL" id="CHEMBL4295757"/>
<dbReference type="GlyCosmos" id="P38646">
    <property type="glycosylation" value="1 site, 1 glycan"/>
</dbReference>
<dbReference type="GlyGen" id="P38646">
    <property type="glycosylation" value="5 sites, 2 N-linked glycans (2 sites), 1 O-linked glycan (2 sites)"/>
</dbReference>
<dbReference type="iPTMnet" id="P38646"/>
<dbReference type="MetOSite" id="P38646"/>
<dbReference type="PhosphoSitePlus" id="P38646"/>
<dbReference type="SwissPalm" id="P38646"/>
<dbReference type="BioMuta" id="HSPA9"/>
<dbReference type="DMDM" id="21264428"/>
<dbReference type="OGP" id="P38646"/>
<dbReference type="REPRODUCTION-2DPAGE" id="IPI00007765"/>
<dbReference type="jPOST" id="P38646"/>
<dbReference type="MassIVE" id="P38646"/>
<dbReference type="PaxDb" id="9606-ENSP00000297185"/>
<dbReference type="PeptideAtlas" id="P38646"/>
<dbReference type="ProteomicsDB" id="55304"/>
<dbReference type="Pumba" id="P38646"/>
<dbReference type="TopDownProteomics" id="P38646"/>
<dbReference type="ABCD" id="P38646">
    <property type="antibodies" value="8 sequenced antibodies"/>
</dbReference>
<dbReference type="Antibodypedia" id="646">
    <property type="antibodies" value="769 antibodies from 48 providers"/>
</dbReference>
<dbReference type="DNASU" id="3313"/>
<dbReference type="Ensembl" id="ENST00000297185.9">
    <property type="protein sequence ID" value="ENSP00000297185.3"/>
    <property type="gene ID" value="ENSG00000113013.16"/>
</dbReference>
<dbReference type="GeneID" id="3313"/>
<dbReference type="KEGG" id="hsa:3313"/>
<dbReference type="MANE-Select" id="ENST00000297185.9">
    <property type="protein sequence ID" value="ENSP00000297185.3"/>
    <property type="RefSeq nucleotide sequence ID" value="NM_004134.7"/>
    <property type="RefSeq protein sequence ID" value="NP_004125.3"/>
</dbReference>
<dbReference type="UCSC" id="uc003ldf.4">
    <property type="organism name" value="human"/>
</dbReference>
<dbReference type="AGR" id="HGNC:5244"/>
<dbReference type="CTD" id="3313"/>
<dbReference type="DisGeNET" id="3313"/>
<dbReference type="GeneCards" id="HSPA9"/>
<dbReference type="HGNC" id="HGNC:5244">
    <property type="gene designation" value="HSPA9"/>
</dbReference>
<dbReference type="HPA" id="ENSG00000113013">
    <property type="expression patterns" value="Low tissue specificity"/>
</dbReference>
<dbReference type="MalaCards" id="HSPA9"/>
<dbReference type="MIM" id="182170">
    <property type="type" value="phenotype"/>
</dbReference>
<dbReference type="MIM" id="600548">
    <property type="type" value="gene"/>
</dbReference>
<dbReference type="MIM" id="616854">
    <property type="type" value="phenotype"/>
</dbReference>
<dbReference type="neXtProt" id="NX_P38646"/>
<dbReference type="OpenTargets" id="ENSG00000113013"/>
<dbReference type="Orphanet" id="260305">
    <property type="disease" value="Autosomal recessive sideroblastic anemia"/>
</dbReference>
<dbReference type="Orphanet" id="496751">
    <property type="disease" value="EVEN-plus syndrome"/>
</dbReference>
<dbReference type="PharmGKB" id="PA162391712"/>
<dbReference type="VEuPathDB" id="HostDB:ENSG00000113013"/>
<dbReference type="eggNOG" id="KOG0102">
    <property type="taxonomic scope" value="Eukaryota"/>
</dbReference>
<dbReference type="GeneTree" id="ENSGT00920000149123"/>
<dbReference type="HOGENOM" id="CLU_005965_2_1_1"/>
<dbReference type="InParanoid" id="P38646"/>
<dbReference type="OMA" id="MGTDWKI"/>
<dbReference type="OrthoDB" id="2401965at2759"/>
<dbReference type="PAN-GO" id="P38646">
    <property type="GO annotations" value="11 GO annotations based on evolutionary models"/>
</dbReference>
<dbReference type="PhylomeDB" id="P38646"/>
<dbReference type="TreeFam" id="TF105046"/>
<dbReference type="BRENDA" id="3.6.4.10">
    <property type="organism ID" value="2681"/>
</dbReference>
<dbReference type="PathwayCommons" id="P38646"/>
<dbReference type="Reactome" id="R-HSA-1268020">
    <property type="pathway name" value="Mitochondrial protein import"/>
</dbReference>
<dbReference type="Reactome" id="R-HSA-3371453">
    <property type="pathway name" value="Regulation of HSF1-mediated heat shock response"/>
</dbReference>
<dbReference type="Reactome" id="R-HSA-6799198">
    <property type="pathway name" value="Complex I biogenesis"/>
</dbReference>
<dbReference type="Reactome" id="R-HSA-8949613">
    <property type="pathway name" value="Cristae formation"/>
</dbReference>
<dbReference type="Reactome" id="R-HSA-8950505">
    <property type="pathway name" value="Gene and protein expression by JAK-STAT signaling after Interleukin-12 stimulation"/>
</dbReference>
<dbReference type="Reactome" id="R-HSA-9837999">
    <property type="pathway name" value="Mitochondrial protein degradation"/>
</dbReference>
<dbReference type="Reactome" id="R-HSA-9841251">
    <property type="pathway name" value="Mitochondrial unfolded protein response (UPRmt)"/>
</dbReference>
<dbReference type="Reactome" id="R-HSA-9865881">
    <property type="pathway name" value="Complex III assembly"/>
</dbReference>
<dbReference type="SignaLink" id="P38646"/>
<dbReference type="SIGNOR" id="P38646"/>
<dbReference type="BioGRID-ORCS" id="3313">
    <property type="hits" value="790 hits in 1138 CRISPR screens"/>
</dbReference>
<dbReference type="CD-CODE" id="232F8A39">
    <property type="entry name" value="P-body"/>
</dbReference>
<dbReference type="CD-CODE" id="8C2F96ED">
    <property type="entry name" value="Centrosome"/>
</dbReference>
<dbReference type="CD-CODE" id="91857CE7">
    <property type="entry name" value="Nucleolus"/>
</dbReference>
<dbReference type="CD-CODE" id="DEE660B4">
    <property type="entry name" value="Stress granule"/>
</dbReference>
<dbReference type="CD-CODE" id="FB4E32DD">
    <property type="entry name" value="Presynaptic clusters and postsynaptic densities"/>
</dbReference>
<dbReference type="ChiTaRS" id="HSPA9">
    <property type="organism name" value="human"/>
</dbReference>
<dbReference type="EvolutionaryTrace" id="P38646"/>
<dbReference type="GeneWiki" id="HSPA9"/>
<dbReference type="GenomeRNAi" id="3313"/>
<dbReference type="Pharos" id="P38646">
    <property type="development level" value="Tchem"/>
</dbReference>
<dbReference type="PRO" id="PR:P38646"/>
<dbReference type="Proteomes" id="UP000005640">
    <property type="component" value="Chromosome 5"/>
</dbReference>
<dbReference type="RNAct" id="P38646">
    <property type="molecule type" value="protein"/>
</dbReference>
<dbReference type="Bgee" id="ENSG00000113013">
    <property type="expression patterns" value="Expressed in adrenal tissue and 210 other cell types or tissues"/>
</dbReference>
<dbReference type="ExpressionAtlas" id="P38646">
    <property type="expression patterns" value="baseline and differential"/>
</dbReference>
<dbReference type="GO" id="GO:0005737">
    <property type="term" value="C:cytoplasm"/>
    <property type="evidence" value="ECO:0000318"/>
    <property type="project" value="GO_Central"/>
</dbReference>
<dbReference type="GO" id="GO:0070062">
    <property type="term" value="C:extracellular exosome"/>
    <property type="evidence" value="ECO:0007005"/>
    <property type="project" value="UniProtKB"/>
</dbReference>
<dbReference type="GO" id="GO:0005925">
    <property type="term" value="C:focal adhesion"/>
    <property type="evidence" value="ECO:0007005"/>
    <property type="project" value="UniProtKB"/>
</dbReference>
<dbReference type="GO" id="GO:0140275">
    <property type="term" value="C:MIB complex"/>
    <property type="evidence" value="ECO:0007005"/>
    <property type="project" value="UniProtKB"/>
</dbReference>
<dbReference type="GO" id="GO:0005743">
    <property type="term" value="C:mitochondrial inner membrane"/>
    <property type="evidence" value="ECO:0000303"/>
    <property type="project" value="ComplexPortal"/>
</dbReference>
<dbReference type="GO" id="GO:0005759">
    <property type="term" value="C:mitochondrial matrix"/>
    <property type="evidence" value="ECO:0000314"/>
    <property type="project" value="FlyBase"/>
</dbReference>
<dbReference type="GO" id="GO:0042645">
    <property type="term" value="C:mitochondrial nucleoid"/>
    <property type="evidence" value="ECO:0000314"/>
    <property type="project" value="BHF-UCL"/>
</dbReference>
<dbReference type="GO" id="GO:0005739">
    <property type="term" value="C:mitochondrion"/>
    <property type="evidence" value="ECO:0000314"/>
    <property type="project" value="UniProtKB"/>
</dbReference>
<dbReference type="GO" id="GO:0005730">
    <property type="term" value="C:nucleolus"/>
    <property type="evidence" value="ECO:0007669"/>
    <property type="project" value="UniProtKB-SubCell"/>
</dbReference>
<dbReference type="GO" id="GO:0001401">
    <property type="term" value="C:SAM complex"/>
    <property type="evidence" value="ECO:0007005"/>
    <property type="project" value="UniProtKB"/>
</dbReference>
<dbReference type="GO" id="GO:0005744">
    <property type="term" value="C:TIM23 mitochondrial import inner membrane translocase complex"/>
    <property type="evidence" value="ECO:0000303"/>
    <property type="project" value="ComplexPortal"/>
</dbReference>
<dbReference type="GO" id="GO:0005524">
    <property type="term" value="F:ATP binding"/>
    <property type="evidence" value="ECO:0007669"/>
    <property type="project" value="UniProtKB-KW"/>
</dbReference>
<dbReference type="GO" id="GO:0016887">
    <property type="term" value="F:ATP hydrolysis activity"/>
    <property type="evidence" value="ECO:0000314"/>
    <property type="project" value="UniProtKB"/>
</dbReference>
<dbReference type="GO" id="GO:0140662">
    <property type="term" value="F:ATP-dependent protein folding chaperone"/>
    <property type="evidence" value="ECO:0007669"/>
    <property type="project" value="InterPro"/>
</dbReference>
<dbReference type="GO" id="GO:0031072">
    <property type="term" value="F:heat shock protein binding"/>
    <property type="evidence" value="ECO:0000318"/>
    <property type="project" value="GO_Central"/>
</dbReference>
<dbReference type="GO" id="GO:0044183">
    <property type="term" value="F:protein folding chaperone"/>
    <property type="evidence" value="ECO:0000318"/>
    <property type="project" value="GO_Central"/>
</dbReference>
<dbReference type="GO" id="GO:0003723">
    <property type="term" value="F:RNA binding"/>
    <property type="evidence" value="ECO:0007005"/>
    <property type="project" value="UniProtKB"/>
</dbReference>
<dbReference type="GO" id="GO:0031625">
    <property type="term" value="F:ubiquitin protein ligase binding"/>
    <property type="evidence" value="ECO:0000353"/>
    <property type="project" value="ParkinsonsUK-UCL"/>
</dbReference>
<dbReference type="GO" id="GO:0051082">
    <property type="term" value="F:unfolded protein binding"/>
    <property type="evidence" value="ECO:0000304"/>
    <property type="project" value="UniProtKB"/>
</dbReference>
<dbReference type="GO" id="GO:0036444">
    <property type="term" value="P:calcium import into the mitochondrion"/>
    <property type="evidence" value="ECO:0000250"/>
    <property type="project" value="UniProtKB"/>
</dbReference>
<dbReference type="GO" id="GO:0051085">
    <property type="term" value="P:chaperone cofactor-dependent protein refolding"/>
    <property type="evidence" value="ECO:0000318"/>
    <property type="project" value="GO_Central"/>
</dbReference>
<dbReference type="GO" id="GO:0030218">
    <property type="term" value="P:erythrocyte differentiation"/>
    <property type="evidence" value="ECO:0000315"/>
    <property type="project" value="UniProtKB"/>
</dbReference>
<dbReference type="GO" id="GO:0007007">
    <property type="term" value="P:inner mitochondrial membrane organization"/>
    <property type="evidence" value="ECO:0000305"/>
    <property type="project" value="UniProtKB"/>
</dbReference>
<dbReference type="GO" id="GO:0006886">
    <property type="term" value="P:intracellular protein transport"/>
    <property type="evidence" value="ECO:0000303"/>
    <property type="project" value="ComplexPortal"/>
</dbReference>
<dbReference type="GO" id="GO:0016226">
    <property type="term" value="P:iron-sulfur cluster assembly"/>
    <property type="evidence" value="ECO:0000315"/>
    <property type="project" value="UniProtKB"/>
</dbReference>
<dbReference type="GO" id="GO:0043066">
    <property type="term" value="P:negative regulation of apoptotic process"/>
    <property type="evidence" value="ECO:0000304"/>
    <property type="project" value="UniProtKB"/>
</dbReference>
<dbReference type="GO" id="GO:0045647">
    <property type="term" value="P:negative regulation of erythrocyte differentiation"/>
    <property type="evidence" value="ECO:0000315"/>
    <property type="project" value="UniProtKB"/>
</dbReference>
<dbReference type="GO" id="GO:1902037">
    <property type="term" value="P:negative regulation of hematopoietic stem cell differentiation"/>
    <property type="evidence" value="ECO:0007669"/>
    <property type="project" value="Ensembl"/>
</dbReference>
<dbReference type="GO" id="GO:1903707">
    <property type="term" value="P:negative regulation of hemopoiesis"/>
    <property type="evidence" value="ECO:0007669"/>
    <property type="project" value="Ensembl"/>
</dbReference>
<dbReference type="GO" id="GO:0043065">
    <property type="term" value="P:positive regulation of apoptotic process"/>
    <property type="evidence" value="ECO:0000314"/>
    <property type="project" value="UniProt"/>
</dbReference>
<dbReference type="GO" id="GO:0006611">
    <property type="term" value="P:protein export from nucleus"/>
    <property type="evidence" value="ECO:0007669"/>
    <property type="project" value="Ensembl"/>
</dbReference>
<dbReference type="GO" id="GO:0042026">
    <property type="term" value="P:protein refolding"/>
    <property type="evidence" value="ECO:0000318"/>
    <property type="project" value="GO_Central"/>
</dbReference>
<dbReference type="GO" id="GO:0045646">
    <property type="term" value="P:regulation of erythrocyte differentiation"/>
    <property type="evidence" value="ECO:0000315"/>
    <property type="project" value="UniProtKB"/>
</dbReference>
<dbReference type="CDD" id="cd11733">
    <property type="entry name" value="ASKHA_NBD_HSP70_HSPA9"/>
    <property type="match status" value="1"/>
</dbReference>
<dbReference type="FunFam" id="2.60.34.10:FF:000014">
    <property type="entry name" value="Chaperone protein DnaK HSP70"/>
    <property type="match status" value="1"/>
</dbReference>
<dbReference type="FunFam" id="3.30.420.40:FF:000020">
    <property type="entry name" value="Chaperone protein HscA homolog"/>
    <property type="match status" value="1"/>
</dbReference>
<dbReference type="FunFam" id="3.30.30.30:FF:000003">
    <property type="entry name" value="Heat shock protein 9"/>
    <property type="match status" value="1"/>
</dbReference>
<dbReference type="FunFam" id="3.30.420.40:FF:000004">
    <property type="entry name" value="Molecular chaperone DnaK"/>
    <property type="match status" value="1"/>
</dbReference>
<dbReference type="FunFam" id="3.90.640.10:FF:000003">
    <property type="entry name" value="Molecular chaperone DnaK"/>
    <property type="match status" value="1"/>
</dbReference>
<dbReference type="FunFam" id="1.20.1270.10:FF:000011">
    <property type="entry name" value="stress-70 protein, mitochondrial isoform X1"/>
    <property type="match status" value="1"/>
</dbReference>
<dbReference type="Gene3D" id="1.20.1270.10">
    <property type="match status" value="1"/>
</dbReference>
<dbReference type="Gene3D" id="3.30.30.30">
    <property type="match status" value="1"/>
</dbReference>
<dbReference type="Gene3D" id="3.30.420.40">
    <property type="match status" value="2"/>
</dbReference>
<dbReference type="Gene3D" id="3.90.640.10">
    <property type="entry name" value="Actin, Chain A, domain 4"/>
    <property type="match status" value="1"/>
</dbReference>
<dbReference type="Gene3D" id="2.60.34.10">
    <property type="entry name" value="Substrate Binding Domain Of DNAk, Chain A, domain 1"/>
    <property type="match status" value="1"/>
</dbReference>
<dbReference type="HAMAP" id="MF_00332">
    <property type="entry name" value="DnaK"/>
    <property type="match status" value="1"/>
</dbReference>
<dbReference type="InterPro" id="IPR043129">
    <property type="entry name" value="ATPase_NBD"/>
</dbReference>
<dbReference type="InterPro" id="IPR012725">
    <property type="entry name" value="Chaperone_DnaK"/>
</dbReference>
<dbReference type="InterPro" id="IPR018181">
    <property type="entry name" value="Heat_shock_70_CS"/>
</dbReference>
<dbReference type="InterPro" id="IPR029048">
    <property type="entry name" value="HSP70_C_sf"/>
</dbReference>
<dbReference type="InterPro" id="IPR029047">
    <property type="entry name" value="HSP70_peptide-bd_sf"/>
</dbReference>
<dbReference type="InterPro" id="IPR013126">
    <property type="entry name" value="Hsp_70_fam"/>
</dbReference>
<dbReference type="NCBIfam" id="NF001413">
    <property type="entry name" value="PRK00290.1"/>
    <property type="match status" value="1"/>
</dbReference>
<dbReference type="NCBIfam" id="NF003520">
    <property type="entry name" value="PRK05183.1"/>
    <property type="match status" value="1"/>
</dbReference>
<dbReference type="NCBIfam" id="TIGR02350">
    <property type="entry name" value="prok_dnaK"/>
    <property type="match status" value="1"/>
</dbReference>
<dbReference type="PANTHER" id="PTHR19375">
    <property type="entry name" value="HEAT SHOCK PROTEIN 70KDA"/>
    <property type="match status" value="1"/>
</dbReference>
<dbReference type="Pfam" id="PF00012">
    <property type="entry name" value="HSP70"/>
    <property type="match status" value="1"/>
</dbReference>
<dbReference type="PRINTS" id="PR00301">
    <property type="entry name" value="HEATSHOCK70"/>
</dbReference>
<dbReference type="SUPFAM" id="SSF53067">
    <property type="entry name" value="Actin-like ATPase domain"/>
    <property type="match status" value="2"/>
</dbReference>
<dbReference type="SUPFAM" id="SSF100920">
    <property type="entry name" value="Heat shock protein 70kD (HSP70), peptide-binding domain"/>
    <property type="match status" value="1"/>
</dbReference>
<dbReference type="PROSITE" id="PS00297">
    <property type="entry name" value="HSP70_1"/>
    <property type="match status" value="1"/>
</dbReference>
<dbReference type="PROSITE" id="PS00329">
    <property type="entry name" value="HSP70_2"/>
    <property type="match status" value="1"/>
</dbReference>
<dbReference type="PROSITE" id="PS01036">
    <property type="entry name" value="HSP70_3"/>
    <property type="match status" value="1"/>
</dbReference>
<name>HSPA9_HUMAN</name>
<evidence type="ECO:0000250" key="1">
    <source>
        <dbReference type="UniProtKB" id="P0CS90"/>
    </source>
</evidence>
<evidence type="ECO:0000250" key="2">
    <source>
        <dbReference type="UniProtKB" id="P0DMV8"/>
    </source>
</evidence>
<evidence type="ECO:0000250" key="3">
    <source>
        <dbReference type="UniProtKB" id="P11021"/>
    </source>
</evidence>
<evidence type="ECO:0000250" key="4">
    <source>
        <dbReference type="UniProtKB" id="P38647"/>
    </source>
</evidence>
<evidence type="ECO:0000250" key="5">
    <source>
        <dbReference type="UniProtKB" id="P48721"/>
    </source>
</evidence>
<evidence type="ECO:0000256" key="6">
    <source>
        <dbReference type="SAM" id="MobiDB-lite"/>
    </source>
</evidence>
<evidence type="ECO:0000269" key="7">
    <source>
    </source>
</evidence>
<evidence type="ECO:0000269" key="8">
    <source>
    </source>
</evidence>
<evidence type="ECO:0000269" key="9">
    <source>
    </source>
</evidence>
<evidence type="ECO:0000269" key="10">
    <source>
    </source>
</evidence>
<evidence type="ECO:0000269" key="11">
    <source>
    </source>
</evidence>
<evidence type="ECO:0000269" key="12">
    <source>
    </source>
</evidence>
<evidence type="ECO:0000269" key="13">
    <source>
    </source>
</evidence>
<evidence type="ECO:0000269" key="14">
    <source>
    </source>
</evidence>
<evidence type="ECO:0000269" key="15">
    <source>
    </source>
</evidence>
<evidence type="ECO:0000269" key="16">
    <source>
    </source>
</evidence>
<evidence type="ECO:0000269" key="17">
    <source>
    </source>
</evidence>
<evidence type="ECO:0000269" key="18">
    <source>
    </source>
</evidence>
<evidence type="ECO:0000269" key="19">
    <source>
    </source>
</evidence>
<evidence type="ECO:0000269" key="20">
    <source>
    </source>
</evidence>
<evidence type="ECO:0000269" key="21">
    <source>
    </source>
</evidence>
<evidence type="ECO:0000269" key="22">
    <source>
    </source>
</evidence>
<evidence type="ECO:0000269" key="23">
    <source>
    </source>
</evidence>
<evidence type="ECO:0000269" key="24">
    <source>
    </source>
</evidence>
<evidence type="ECO:0000269" key="25">
    <source>
    </source>
</evidence>
<evidence type="ECO:0000269" key="26">
    <source>
    </source>
</evidence>
<evidence type="ECO:0000269" key="27">
    <source>
    </source>
</evidence>
<evidence type="ECO:0000269" key="28">
    <source>
    </source>
</evidence>
<evidence type="ECO:0000269" key="29">
    <source>
    </source>
</evidence>
<evidence type="ECO:0000269" key="30">
    <source>
    </source>
</evidence>
<evidence type="ECO:0000269" key="31">
    <source>
    </source>
</evidence>
<evidence type="ECO:0000269" key="32">
    <source>
    </source>
</evidence>
<evidence type="ECO:0000269" key="33">
    <source ref="5"/>
</evidence>
<evidence type="ECO:0000303" key="34">
    <source>
    </source>
</evidence>
<evidence type="ECO:0000303" key="35">
    <source>
    </source>
</evidence>
<evidence type="ECO:0000305" key="36"/>
<evidence type="ECO:0000305" key="37">
    <source>
    </source>
</evidence>
<evidence type="ECO:0000312" key="38">
    <source>
        <dbReference type="HGNC" id="HGNC:5244"/>
    </source>
</evidence>
<evidence type="ECO:0007744" key="39">
    <source>
        <dbReference type="PDB" id="4KBO"/>
    </source>
</evidence>
<evidence type="ECO:0007744" key="40">
    <source>
        <dbReference type="PDB" id="6NHK"/>
    </source>
</evidence>
<evidence type="ECO:0007744" key="41">
    <source>
        <dbReference type="PDB" id="6P2U"/>
    </source>
</evidence>
<evidence type="ECO:0007744" key="42">
    <source>
    </source>
</evidence>
<evidence type="ECO:0007744" key="43">
    <source>
    </source>
</evidence>
<evidence type="ECO:0007744" key="44">
    <source>
    </source>
</evidence>
<evidence type="ECO:0007829" key="45">
    <source>
        <dbReference type="PDB" id="3N8E"/>
    </source>
</evidence>
<evidence type="ECO:0007829" key="46">
    <source>
        <dbReference type="PDB" id="6NHK"/>
    </source>
</evidence>
<evidence type="ECO:0007829" key="47">
    <source>
        <dbReference type="PDB" id="6P2U"/>
    </source>
</evidence>
<evidence type="ECO:0007829" key="48">
    <source>
        <dbReference type="PDB" id="6PMT"/>
    </source>
</evidence>
<proteinExistence type="evidence at protein level"/>